<dbReference type="EC" id="1.11.1.7"/>
<dbReference type="EMBL" id="X98322">
    <property type="protein sequence ID" value="CAA66966.1"/>
    <property type="molecule type" value="mRNA"/>
</dbReference>
<dbReference type="EMBL" id="X98776">
    <property type="protein sequence ID" value="CAA67312.1"/>
    <property type="molecule type" value="mRNA"/>
</dbReference>
<dbReference type="EMBL" id="AB006706">
    <property type="protein sequence ID" value="BAB09581.1"/>
    <property type="molecule type" value="Genomic_DNA"/>
</dbReference>
<dbReference type="EMBL" id="CP002688">
    <property type="protein sequence ID" value="AED92474.1"/>
    <property type="molecule type" value="Genomic_DNA"/>
</dbReference>
<dbReference type="EMBL" id="BT002958">
    <property type="protein sequence ID" value="AAO22769.2"/>
    <property type="molecule type" value="mRNA"/>
</dbReference>
<dbReference type="EMBL" id="AY087882">
    <property type="protein sequence ID" value="AAM65434.1"/>
    <property type="status" value="ALT_INIT"/>
    <property type="molecule type" value="mRNA"/>
</dbReference>
<dbReference type="RefSeq" id="NP_197284.1">
    <property type="nucleotide sequence ID" value="NM_121788.4"/>
</dbReference>
<dbReference type="SMR" id="Q43729"/>
<dbReference type="BioGRID" id="16926">
    <property type="interactions" value="1"/>
</dbReference>
<dbReference type="FunCoup" id="Q43729">
    <property type="interactions" value="140"/>
</dbReference>
<dbReference type="STRING" id="3702.Q43729"/>
<dbReference type="PeroxiBase" id="223">
    <property type="entry name" value="AtPrx57"/>
</dbReference>
<dbReference type="GlyGen" id="Q43729">
    <property type="glycosylation" value="2 sites"/>
</dbReference>
<dbReference type="iPTMnet" id="Q43729"/>
<dbReference type="PaxDb" id="3702-AT5G17820.1"/>
<dbReference type="EnsemblPlants" id="AT5G17820.1">
    <property type="protein sequence ID" value="AT5G17820.1"/>
    <property type="gene ID" value="AT5G17820"/>
</dbReference>
<dbReference type="GeneID" id="831650"/>
<dbReference type="Gramene" id="AT5G17820.1">
    <property type="protein sequence ID" value="AT5G17820.1"/>
    <property type="gene ID" value="AT5G17820"/>
</dbReference>
<dbReference type="KEGG" id="ath:AT5G17820"/>
<dbReference type="Araport" id="AT5G17820"/>
<dbReference type="TAIR" id="AT5G17820">
    <property type="gene designation" value="PER57"/>
</dbReference>
<dbReference type="eggNOG" id="ENOG502QPI1">
    <property type="taxonomic scope" value="Eukaryota"/>
</dbReference>
<dbReference type="HOGENOM" id="CLU_010543_0_3_1"/>
<dbReference type="InParanoid" id="Q43729"/>
<dbReference type="OrthoDB" id="2113341at2759"/>
<dbReference type="PhylomeDB" id="Q43729"/>
<dbReference type="PRO" id="PR:Q43729"/>
<dbReference type="Proteomes" id="UP000006548">
    <property type="component" value="Chromosome 5"/>
</dbReference>
<dbReference type="ExpressionAtlas" id="Q43729">
    <property type="expression patterns" value="baseline and differential"/>
</dbReference>
<dbReference type="GO" id="GO:0005576">
    <property type="term" value="C:extracellular region"/>
    <property type="evidence" value="ECO:0007669"/>
    <property type="project" value="UniProtKB-SubCell"/>
</dbReference>
<dbReference type="GO" id="GO:0009505">
    <property type="term" value="C:plant-type cell wall"/>
    <property type="evidence" value="ECO:0007005"/>
    <property type="project" value="TAIR"/>
</dbReference>
<dbReference type="GO" id="GO:0009506">
    <property type="term" value="C:plasmodesma"/>
    <property type="evidence" value="ECO:0007005"/>
    <property type="project" value="TAIR"/>
</dbReference>
<dbReference type="GO" id="GO:0020037">
    <property type="term" value="F:heme binding"/>
    <property type="evidence" value="ECO:0007669"/>
    <property type="project" value="InterPro"/>
</dbReference>
<dbReference type="GO" id="GO:0140825">
    <property type="term" value="F:lactoperoxidase activity"/>
    <property type="evidence" value="ECO:0007669"/>
    <property type="project" value="UniProtKB-EC"/>
</dbReference>
<dbReference type="GO" id="GO:0046872">
    <property type="term" value="F:metal ion binding"/>
    <property type="evidence" value="ECO:0007669"/>
    <property type="project" value="UniProtKB-KW"/>
</dbReference>
<dbReference type="GO" id="GO:0042744">
    <property type="term" value="P:hydrogen peroxide catabolic process"/>
    <property type="evidence" value="ECO:0007669"/>
    <property type="project" value="UniProtKB-KW"/>
</dbReference>
<dbReference type="GO" id="GO:0006979">
    <property type="term" value="P:response to oxidative stress"/>
    <property type="evidence" value="ECO:0007669"/>
    <property type="project" value="InterPro"/>
</dbReference>
<dbReference type="CDD" id="cd00693">
    <property type="entry name" value="secretory_peroxidase"/>
    <property type="match status" value="1"/>
</dbReference>
<dbReference type="FunFam" id="1.10.420.10:FF:000007">
    <property type="entry name" value="Peroxidase"/>
    <property type="match status" value="1"/>
</dbReference>
<dbReference type="FunFam" id="1.10.520.10:FF:000001">
    <property type="entry name" value="Peroxidase"/>
    <property type="match status" value="1"/>
</dbReference>
<dbReference type="Gene3D" id="1.10.520.10">
    <property type="match status" value="1"/>
</dbReference>
<dbReference type="Gene3D" id="1.10.420.10">
    <property type="entry name" value="Peroxidase, domain 2"/>
    <property type="match status" value="1"/>
</dbReference>
<dbReference type="InterPro" id="IPR002016">
    <property type="entry name" value="Haem_peroxidase"/>
</dbReference>
<dbReference type="InterPro" id="IPR010255">
    <property type="entry name" value="Haem_peroxidase_sf"/>
</dbReference>
<dbReference type="InterPro" id="IPR000823">
    <property type="entry name" value="Peroxidase_pln"/>
</dbReference>
<dbReference type="InterPro" id="IPR019794">
    <property type="entry name" value="Peroxidases_AS"/>
</dbReference>
<dbReference type="InterPro" id="IPR019793">
    <property type="entry name" value="Peroxidases_heam-ligand_BS"/>
</dbReference>
<dbReference type="InterPro" id="IPR033905">
    <property type="entry name" value="Secretory_peroxidase"/>
</dbReference>
<dbReference type="PANTHER" id="PTHR31517">
    <property type="match status" value="1"/>
</dbReference>
<dbReference type="PANTHER" id="PTHR31517:SF59">
    <property type="entry name" value="PEROXIDASE"/>
    <property type="match status" value="1"/>
</dbReference>
<dbReference type="Pfam" id="PF00141">
    <property type="entry name" value="peroxidase"/>
    <property type="match status" value="1"/>
</dbReference>
<dbReference type="PRINTS" id="PR00458">
    <property type="entry name" value="PEROXIDASE"/>
</dbReference>
<dbReference type="PRINTS" id="PR00461">
    <property type="entry name" value="PLPEROXIDASE"/>
</dbReference>
<dbReference type="SUPFAM" id="SSF48113">
    <property type="entry name" value="Heme-dependent peroxidases"/>
    <property type="match status" value="1"/>
</dbReference>
<dbReference type="PROSITE" id="PS00435">
    <property type="entry name" value="PEROXIDASE_1"/>
    <property type="match status" value="1"/>
</dbReference>
<dbReference type="PROSITE" id="PS00436">
    <property type="entry name" value="PEROXIDASE_2"/>
    <property type="match status" value="1"/>
</dbReference>
<dbReference type="PROSITE" id="PS50873">
    <property type="entry name" value="PEROXIDASE_4"/>
    <property type="match status" value="1"/>
</dbReference>
<protein>
    <recommendedName>
        <fullName>Peroxidase 57</fullName>
        <shortName>Atperox P57</shortName>
        <ecNumber>1.11.1.7</ecNumber>
    </recommendedName>
    <alternativeName>
        <fullName>ATP13a</fullName>
    </alternativeName>
    <alternativeName>
        <fullName>PRXR10</fullName>
    </alternativeName>
</protein>
<proteinExistence type="evidence at protein level"/>
<sequence length="313" mass="34098">MMKGAKFSSLLVLFFIFPIAFAQLRVGFYSQSCPQAETIVRNLVRQRFGVTPTVTAALLRMHFHDCFVKGCDASLLIDSTNSEKTAGPNGSVREFDLIDRIKAQLEAACPSTVSCADIVTLATRDSVALAGGPSYSIPTGRRDGRVSNNLDVTLPGPTISVSGAVSLFTNKGMNTFDAVALLGAHTVGQGNCGLFSDRITSFQGTGRPDPSMDPALVTSLRNTCRNSATAALDQSSPLRFDNQFFKQIRKRRGVLQVDQRLASDPQTRGIVARYANNNAFFKRQFVRAMVKMGAVDVLTGRNGEIRRNCRRFN</sequence>
<accession>Q43729</accession>
<accession>Q84WN8</accession>
<organism>
    <name type="scientific">Arabidopsis thaliana</name>
    <name type="common">Mouse-ear cress</name>
    <dbReference type="NCBI Taxonomy" id="3702"/>
    <lineage>
        <taxon>Eukaryota</taxon>
        <taxon>Viridiplantae</taxon>
        <taxon>Streptophyta</taxon>
        <taxon>Embryophyta</taxon>
        <taxon>Tracheophyta</taxon>
        <taxon>Spermatophyta</taxon>
        <taxon>Magnoliopsida</taxon>
        <taxon>eudicotyledons</taxon>
        <taxon>Gunneridae</taxon>
        <taxon>Pentapetalae</taxon>
        <taxon>rosids</taxon>
        <taxon>malvids</taxon>
        <taxon>Brassicales</taxon>
        <taxon>Brassicaceae</taxon>
        <taxon>Camelineae</taxon>
        <taxon>Arabidopsis</taxon>
    </lineage>
</organism>
<name>PER57_ARATH</name>
<reference key="1">
    <citation type="online journal article" date="1996" name="Plant Gene Register">
        <title>Eleven cDNA clones from Arabidopsis thaliana encoding isoperoxidases.</title>
        <authorList>
            <person name="Capelli N."/>
            <person name="Tognolli M."/>
            <person name="Flach J."/>
            <person name="Overney S."/>
            <person name="Penel C."/>
            <person name="Greppin H."/>
            <person name="Simon P."/>
        </authorList>
        <locator>PGR96-066</locator>
    </citation>
    <scope>NUCLEOTIDE SEQUENCE [MRNA]</scope>
    <source>
        <strain>cv. Columbia</strain>
    </source>
</reference>
<reference key="2">
    <citation type="submission" date="1996-06" db="EMBL/GenBank/DDBJ databases">
        <title>From expressed sequence tags to structure, function, evolution and expression of 28 ER-targeted Arabidopsis peroxidases.</title>
        <authorList>
            <person name="Welinder K.G."/>
            <person name="Jespersen H.M."/>
            <person name="Kjaersgaard I.V.H."/>
            <person name="Justesen A.F."/>
            <person name="Oestergaard L."/>
            <person name="Abelskov A.K."/>
            <person name="Jensen R.B."/>
            <person name="Hansen L.N."/>
            <person name="Rasmussen S.K."/>
        </authorList>
    </citation>
    <scope>NUCLEOTIDE SEQUENCE [MRNA]</scope>
    <source>
        <strain>cv. Columbia</strain>
    </source>
</reference>
<reference key="3">
    <citation type="journal article" date="1997" name="DNA Res.">
        <title>Structural analysis of Arabidopsis thaliana chromosome 5. II. Sequence features of the regions of 1,044,062 bp covered by thirteen physically assigned P1 clones.</title>
        <authorList>
            <person name="Kotani H."/>
            <person name="Nakamura Y."/>
            <person name="Sato S."/>
            <person name="Kaneko T."/>
            <person name="Asamizu E."/>
            <person name="Miyajima N."/>
            <person name="Tabata S."/>
        </authorList>
    </citation>
    <scope>NUCLEOTIDE SEQUENCE [LARGE SCALE GENOMIC DNA]</scope>
    <source>
        <strain>cv. Columbia</strain>
    </source>
</reference>
<reference key="4">
    <citation type="journal article" date="2017" name="Plant J.">
        <title>Araport11: a complete reannotation of the Arabidopsis thaliana reference genome.</title>
        <authorList>
            <person name="Cheng C.Y."/>
            <person name="Krishnakumar V."/>
            <person name="Chan A.P."/>
            <person name="Thibaud-Nissen F."/>
            <person name="Schobel S."/>
            <person name="Town C.D."/>
        </authorList>
    </citation>
    <scope>GENOME REANNOTATION</scope>
    <source>
        <strain>cv. Columbia</strain>
    </source>
</reference>
<reference key="5">
    <citation type="journal article" date="2003" name="Science">
        <title>Empirical analysis of transcriptional activity in the Arabidopsis genome.</title>
        <authorList>
            <person name="Yamada K."/>
            <person name="Lim J."/>
            <person name="Dale J.M."/>
            <person name="Chen H."/>
            <person name="Shinn P."/>
            <person name="Palm C.J."/>
            <person name="Southwick A.M."/>
            <person name="Wu H.C."/>
            <person name="Kim C.J."/>
            <person name="Nguyen M."/>
            <person name="Pham P.K."/>
            <person name="Cheuk R.F."/>
            <person name="Karlin-Newmann G."/>
            <person name="Liu S.X."/>
            <person name="Lam B."/>
            <person name="Sakano H."/>
            <person name="Wu T."/>
            <person name="Yu G."/>
            <person name="Miranda M."/>
            <person name="Quach H.L."/>
            <person name="Tripp M."/>
            <person name="Chang C.H."/>
            <person name="Lee J.M."/>
            <person name="Toriumi M.J."/>
            <person name="Chan M.M."/>
            <person name="Tang C.C."/>
            <person name="Onodera C.S."/>
            <person name="Deng J.M."/>
            <person name="Akiyama K."/>
            <person name="Ansari Y."/>
            <person name="Arakawa T."/>
            <person name="Banh J."/>
            <person name="Banno F."/>
            <person name="Bowser L."/>
            <person name="Brooks S.Y."/>
            <person name="Carninci P."/>
            <person name="Chao Q."/>
            <person name="Choy N."/>
            <person name="Enju A."/>
            <person name="Goldsmith A.D."/>
            <person name="Gurjal M."/>
            <person name="Hansen N.F."/>
            <person name="Hayashizaki Y."/>
            <person name="Johnson-Hopson C."/>
            <person name="Hsuan V.W."/>
            <person name="Iida K."/>
            <person name="Karnes M."/>
            <person name="Khan S."/>
            <person name="Koesema E."/>
            <person name="Ishida J."/>
            <person name="Jiang P.X."/>
            <person name="Jones T."/>
            <person name="Kawai J."/>
            <person name="Kamiya A."/>
            <person name="Meyers C."/>
            <person name="Nakajima M."/>
            <person name="Narusaka M."/>
            <person name="Seki M."/>
            <person name="Sakurai T."/>
            <person name="Satou M."/>
            <person name="Tamse R."/>
            <person name="Vaysberg M."/>
            <person name="Wallender E.K."/>
            <person name="Wong C."/>
            <person name="Yamamura Y."/>
            <person name="Yuan S."/>
            <person name="Shinozaki K."/>
            <person name="Davis R.W."/>
            <person name="Theologis A."/>
            <person name="Ecker J.R."/>
        </authorList>
    </citation>
    <scope>NUCLEOTIDE SEQUENCE [LARGE SCALE MRNA]</scope>
    <source>
        <strain>cv. Columbia</strain>
    </source>
</reference>
<reference key="6">
    <citation type="submission" date="2002-03" db="EMBL/GenBank/DDBJ databases">
        <title>Full-length cDNA from Arabidopsis thaliana.</title>
        <authorList>
            <person name="Brover V.V."/>
            <person name="Troukhan M.E."/>
            <person name="Alexandrov N.A."/>
            <person name="Lu Y.-P."/>
            <person name="Flavell R.B."/>
            <person name="Feldmann K.A."/>
        </authorList>
    </citation>
    <scope>NUCLEOTIDE SEQUENCE [LARGE SCALE MRNA]</scope>
</reference>
<reference key="7">
    <citation type="journal article" date="1998" name="FEBS Lett.">
        <title>Computational analyses and annotations of the Arabidopsis peroxidase gene family.</title>
        <authorList>
            <person name="Oestergaard L."/>
            <person name="Pedersen A.G."/>
            <person name="Jespersen H.M."/>
            <person name="Brunak S."/>
            <person name="Welinder K.G."/>
        </authorList>
    </citation>
    <scope>CHARACTERIZATION</scope>
    <source>
        <strain>cv. Columbia</strain>
    </source>
</reference>
<reference key="8">
    <citation type="journal article" date="2001" name="Plant Physiol. Biochem.">
        <title>Toward elucidating the global gene expression patterns of developing Arabidopsis: parallel analysis of 8300 genes by a high-density oligonucleotide probe array.</title>
        <authorList>
            <person name="Zhu T."/>
            <person name="Budworth P."/>
            <person name="Han B."/>
            <person name="Brown D."/>
            <person name="Chang H.-S."/>
            <person name="Zou G."/>
            <person name="Wang X."/>
        </authorList>
    </citation>
    <scope>TISSUE SPECIFICITY</scope>
    <source>
        <strain>cv. Columbia</strain>
    </source>
</reference>
<reference key="9">
    <citation type="journal article" date="1998" name="Plant J.">
        <title>Differential gene expression in Arabidopsis monitored using cDNA arrays.</title>
        <authorList>
            <person name="Desprez T."/>
            <person name="Amselem J."/>
            <person name="Caboche M."/>
            <person name="Hoefte H."/>
        </authorList>
    </citation>
    <scope>INDUCTION</scope>
    <source>
        <strain>cv. Columbia</strain>
    </source>
</reference>
<reference key="10">
    <citation type="journal article" date="2000" name="Proc. Natl. Acad. Sci. U.S.A.">
        <title>Coordinated plant defense responses in Arabidopsis revealed by microarray analysis.</title>
        <authorList>
            <person name="Schenk P.M."/>
            <person name="Kazan K."/>
            <person name="Wilson I."/>
            <person name="Anderson J.P."/>
            <person name="Richmond T."/>
            <person name="Somerville S.C."/>
            <person name="Manners J.M."/>
        </authorList>
    </citation>
    <scope>INDUCTION</scope>
    <source>
        <strain>cv. Columbia</strain>
    </source>
</reference>
<reference key="11">
    <citation type="journal article" date="2001" name="Plant Physiol.">
        <title>Response of Arabidopsis to iron deficiency stress as revealed by microarray analysis.</title>
        <authorList>
            <person name="Thimm O."/>
            <person name="Essigmann B."/>
            <person name="Kloska S."/>
            <person name="Altmann T."/>
            <person name="Buckhout T.J."/>
        </authorList>
    </citation>
    <scope>INDUCTION</scope>
    <source>
        <strain>cv. Columbia</strain>
    </source>
</reference>
<reference key="12">
    <citation type="journal article" date="2002" name="Plant Cell">
        <title>Arabidopsis transcriptome profiling indicates that multiple regulatory pathways are activated during cold acclimation in addition to the CBF cold response pathway.</title>
        <authorList>
            <person name="Fowler S."/>
            <person name="Thomashow M.F."/>
        </authorList>
    </citation>
    <scope>INDUCTION</scope>
    <source>
        <strain>cv. Columbia</strain>
    </source>
</reference>
<reference key="13">
    <citation type="journal article" date="2002" name="Gene">
        <title>Analysis and expression of the class III peroxidase large gene family in Arabidopsis thaliana.</title>
        <authorList>
            <person name="Tognolli M."/>
            <person name="Penel C."/>
            <person name="Greppin H."/>
            <person name="Simon P."/>
        </authorList>
    </citation>
    <scope>GENE FAMILY ORGANIZATION</scope>
    <scope>NOMENCLATURE</scope>
    <source>
        <strain>cv. Columbia</strain>
    </source>
</reference>
<gene>
    <name type="primary">PER57</name>
    <name type="synonym">P57</name>
    <name type="ordered locus">At5g17820</name>
    <name type="ORF">MVA3.170</name>
    <name type="ORF">MVA3.18</name>
</gene>
<keyword id="KW-0106">Calcium</keyword>
<keyword id="KW-1015">Disulfide bond</keyword>
<keyword id="KW-0349">Heme</keyword>
<keyword id="KW-0376">Hydrogen peroxide</keyword>
<keyword id="KW-0408">Iron</keyword>
<keyword id="KW-0479">Metal-binding</keyword>
<keyword id="KW-0560">Oxidoreductase</keyword>
<keyword id="KW-0575">Peroxidase</keyword>
<keyword id="KW-1185">Reference proteome</keyword>
<keyword id="KW-0964">Secreted</keyword>
<keyword id="KW-0732">Signal</keyword>
<comment type="function">
    <text>Removal of H(2)O(2), oxidation of toxic reductants, biosynthesis and degradation of lignin, suberization, auxin catabolism, response to environmental stresses such as wounding, pathogen attack and oxidative stress. These functions might be dependent on each isozyme/isoform in each plant tissue.</text>
</comment>
<comment type="catalytic activity">
    <reaction>
        <text>2 a phenolic donor + H2O2 = 2 a phenolic radical donor + 2 H2O</text>
        <dbReference type="Rhea" id="RHEA:56136"/>
        <dbReference type="ChEBI" id="CHEBI:15377"/>
        <dbReference type="ChEBI" id="CHEBI:16240"/>
        <dbReference type="ChEBI" id="CHEBI:139520"/>
        <dbReference type="ChEBI" id="CHEBI:139521"/>
        <dbReference type="EC" id="1.11.1.7"/>
    </reaction>
</comment>
<comment type="cofactor">
    <cofactor evidence="2">
        <name>heme b</name>
        <dbReference type="ChEBI" id="CHEBI:60344"/>
    </cofactor>
    <text evidence="2">Binds 1 heme b (iron(II)-protoporphyrin IX) group per subunit.</text>
</comment>
<comment type="cofactor">
    <cofactor evidence="2">
        <name>Ca(2+)</name>
        <dbReference type="ChEBI" id="CHEBI:29108"/>
    </cofactor>
    <text evidence="2">Binds 2 calcium ions per subunit.</text>
</comment>
<comment type="subcellular location">
    <subcellularLocation>
        <location evidence="2">Secreted</location>
    </subcellularLocation>
</comment>
<comment type="tissue specificity">
    <text evidence="8">Mainly expressed in roots.</text>
</comment>
<comment type="induction">
    <text evidence="4 5 6 7">Positively light-regulated during the firt stage of development. Up-regulated transiently by a cold treatment. Induced in shoots of plants subjected to a long Fe deficiency stress. Down-regulated by salicylic acid, a plant defense-related signaling molecule.</text>
</comment>
<comment type="miscellaneous">
    <text>There are 73 peroxidase genes in A.thaliana.</text>
</comment>
<comment type="similarity">
    <text evidence="2">Belongs to the peroxidase family. Classical plant (class III) peroxidase subfamily.</text>
</comment>
<comment type="sequence caution" evidence="9">
    <conflict type="erroneous initiation">
        <sequence resource="EMBL-CDS" id="AAM65434"/>
    </conflict>
</comment>
<feature type="signal peptide" evidence="1">
    <location>
        <begin position="1"/>
        <end position="22"/>
    </location>
</feature>
<feature type="chain" id="PRO_0000023722" description="Peroxidase 57">
    <location>
        <begin position="23"/>
        <end position="313"/>
    </location>
</feature>
<feature type="active site" description="Proton acceptor" evidence="2 3">
    <location>
        <position position="64"/>
    </location>
</feature>
<feature type="binding site" evidence="2">
    <location>
        <position position="65"/>
    </location>
    <ligand>
        <name>Ca(2+)</name>
        <dbReference type="ChEBI" id="CHEBI:29108"/>
        <label>1</label>
    </ligand>
</feature>
<feature type="binding site" evidence="2">
    <location>
        <position position="68"/>
    </location>
    <ligand>
        <name>Ca(2+)</name>
        <dbReference type="ChEBI" id="CHEBI:29108"/>
        <label>1</label>
    </ligand>
</feature>
<feature type="binding site" evidence="2">
    <location>
        <position position="70"/>
    </location>
    <ligand>
        <name>Ca(2+)</name>
        <dbReference type="ChEBI" id="CHEBI:29108"/>
        <label>1</label>
    </ligand>
</feature>
<feature type="binding site" evidence="2">
    <location>
        <position position="72"/>
    </location>
    <ligand>
        <name>Ca(2+)</name>
        <dbReference type="ChEBI" id="CHEBI:29108"/>
        <label>1</label>
    </ligand>
</feature>
<feature type="binding site" evidence="2">
    <location>
        <position position="74"/>
    </location>
    <ligand>
        <name>Ca(2+)</name>
        <dbReference type="ChEBI" id="CHEBI:29108"/>
        <label>1</label>
    </ligand>
</feature>
<feature type="binding site" evidence="2">
    <location>
        <position position="155"/>
    </location>
    <ligand>
        <name>substrate</name>
    </ligand>
</feature>
<feature type="binding site" description="axial binding residue" evidence="2">
    <location>
        <position position="185"/>
    </location>
    <ligand>
        <name>heme b</name>
        <dbReference type="ChEBI" id="CHEBI:60344"/>
    </ligand>
    <ligandPart>
        <name>Fe</name>
        <dbReference type="ChEBI" id="CHEBI:18248"/>
    </ligandPart>
</feature>
<feature type="binding site" evidence="2">
    <location>
        <position position="186"/>
    </location>
    <ligand>
        <name>Ca(2+)</name>
        <dbReference type="ChEBI" id="CHEBI:29108"/>
        <label>2</label>
    </ligand>
</feature>
<feature type="binding site" evidence="2">
    <location>
        <position position="233"/>
    </location>
    <ligand>
        <name>Ca(2+)</name>
        <dbReference type="ChEBI" id="CHEBI:29108"/>
        <label>2</label>
    </ligand>
</feature>
<feature type="binding site" evidence="2">
    <location>
        <position position="236"/>
    </location>
    <ligand>
        <name>Ca(2+)</name>
        <dbReference type="ChEBI" id="CHEBI:29108"/>
        <label>2</label>
    </ligand>
</feature>
<feature type="binding site" evidence="2">
    <location>
        <position position="241"/>
    </location>
    <ligand>
        <name>Ca(2+)</name>
        <dbReference type="ChEBI" id="CHEBI:29108"/>
        <label>2</label>
    </ligand>
</feature>
<feature type="site" description="Transition state stabilizer" evidence="2">
    <location>
        <position position="60"/>
    </location>
</feature>
<feature type="disulfide bond" evidence="2">
    <location>
        <begin position="33"/>
        <end position="109"/>
    </location>
</feature>
<feature type="disulfide bond" evidence="2">
    <location>
        <begin position="66"/>
        <end position="71"/>
    </location>
</feature>
<feature type="disulfide bond" evidence="2">
    <location>
        <begin position="115"/>
        <end position="309"/>
    </location>
</feature>
<feature type="disulfide bond" evidence="2">
    <location>
        <begin position="192"/>
        <end position="224"/>
    </location>
</feature>
<evidence type="ECO:0000255" key="1"/>
<evidence type="ECO:0000255" key="2">
    <source>
        <dbReference type="PROSITE-ProRule" id="PRU00297"/>
    </source>
</evidence>
<evidence type="ECO:0000255" key="3">
    <source>
        <dbReference type="PROSITE-ProRule" id="PRU10012"/>
    </source>
</evidence>
<evidence type="ECO:0000269" key="4">
    <source>
    </source>
</evidence>
<evidence type="ECO:0000269" key="5">
    <source>
    </source>
</evidence>
<evidence type="ECO:0000269" key="6">
    <source>
    </source>
</evidence>
<evidence type="ECO:0000269" key="7">
    <source>
    </source>
</evidence>
<evidence type="ECO:0000269" key="8">
    <source ref="8"/>
</evidence>
<evidence type="ECO:0000305" key="9"/>